<protein>
    <recommendedName>
        <fullName evidence="1">Large ribosomal subunit protein bL35</fullName>
    </recommendedName>
    <alternativeName>
        <fullName evidence="2">50S ribosomal protein L35</fullName>
    </alternativeName>
</protein>
<organism>
    <name type="scientific">Sphingopyxis alaskensis (strain DSM 13593 / LMG 18877 / RB2256)</name>
    <name type="common">Sphingomonas alaskensis</name>
    <dbReference type="NCBI Taxonomy" id="317655"/>
    <lineage>
        <taxon>Bacteria</taxon>
        <taxon>Pseudomonadati</taxon>
        <taxon>Pseudomonadota</taxon>
        <taxon>Alphaproteobacteria</taxon>
        <taxon>Sphingomonadales</taxon>
        <taxon>Sphingomonadaceae</taxon>
        <taxon>Sphingopyxis</taxon>
    </lineage>
</organism>
<proteinExistence type="inferred from homology"/>
<name>RL35_SPHAL</name>
<dbReference type="EMBL" id="CP000356">
    <property type="protein sequence ID" value="ABF54645.1"/>
    <property type="molecule type" value="Genomic_DNA"/>
</dbReference>
<dbReference type="RefSeq" id="WP_011543209.1">
    <property type="nucleotide sequence ID" value="NC_008048.1"/>
</dbReference>
<dbReference type="SMR" id="Q1GNX7"/>
<dbReference type="STRING" id="317655.Sala_2940"/>
<dbReference type="KEGG" id="sal:Sala_2940"/>
<dbReference type="eggNOG" id="COG0291">
    <property type="taxonomic scope" value="Bacteria"/>
</dbReference>
<dbReference type="HOGENOM" id="CLU_169643_2_1_5"/>
<dbReference type="OrthoDB" id="9804851at2"/>
<dbReference type="Proteomes" id="UP000006578">
    <property type="component" value="Chromosome"/>
</dbReference>
<dbReference type="GO" id="GO:0022625">
    <property type="term" value="C:cytosolic large ribosomal subunit"/>
    <property type="evidence" value="ECO:0007669"/>
    <property type="project" value="TreeGrafter"/>
</dbReference>
<dbReference type="GO" id="GO:0003735">
    <property type="term" value="F:structural constituent of ribosome"/>
    <property type="evidence" value="ECO:0007669"/>
    <property type="project" value="InterPro"/>
</dbReference>
<dbReference type="GO" id="GO:0006412">
    <property type="term" value="P:translation"/>
    <property type="evidence" value="ECO:0007669"/>
    <property type="project" value="UniProtKB-UniRule"/>
</dbReference>
<dbReference type="FunFam" id="4.10.410.60:FF:000001">
    <property type="entry name" value="50S ribosomal protein L35"/>
    <property type="match status" value="1"/>
</dbReference>
<dbReference type="Gene3D" id="4.10.410.60">
    <property type="match status" value="1"/>
</dbReference>
<dbReference type="HAMAP" id="MF_00514">
    <property type="entry name" value="Ribosomal_bL35"/>
    <property type="match status" value="1"/>
</dbReference>
<dbReference type="InterPro" id="IPR001706">
    <property type="entry name" value="Ribosomal_bL35"/>
</dbReference>
<dbReference type="InterPro" id="IPR021137">
    <property type="entry name" value="Ribosomal_bL35-like"/>
</dbReference>
<dbReference type="InterPro" id="IPR018265">
    <property type="entry name" value="Ribosomal_bL35_CS"/>
</dbReference>
<dbReference type="InterPro" id="IPR037229">
    <property type="entry name" value="Ribosomal_bL35_sf"/>
</dbReference>
<dbReference type="NCBIfam" id="TIGR00001">
    <property type="entry name" value="rpmI_bact"/>
    <property type="match status" value="1"/>
</dbReference>
<dbReference type="PANTHER" id="PTHR33343">
    <property type="entry name" value="54S RIBOSOMAL PROTEIN BL35M"/>
    <property type="match status" value="1"/>
</dbReference>
<dbReference type="PANTHER" id="PTHR33343:SF1">
    <property type="entry name" value="LARGE RIBOSOMAL SUBUNIT PROTEIN BL35M"/>
    <property type="match status" value="1"/>
</dbReference>
<dbReference type="Pfam" id="PF01632">
    <property type="entry name" value="Ribosomal_L35p"/>
    <property type="match status" value="1"/>
</dbReference>
<dbReference type="PRINTS" id="PR00064">
    <property type="entry name" value="RIBOSOMALL35"/>
</dbReference>
<dbReference type="SUPFAM" id="SSF143034">
    <property type="entry name" value="L35p-like"/>
    <property type="match status" value="1"/>
</dbReference>
<dbReference type="PROSITE" id="PS00936">
    <property type="entry name" value="RIBOSOMAL_L35"/>
    <property type="match status" value="1"/>
</dbReference>
<keyword id="KW-1185">Reference proteome</keyword>
<keyword id="KW-0687">Ribonucleoprotein</keyword>
<keyword id="KW-0689">Ribosomal protein</keyword>
<sequence length="67" mass="7502">MPKLKTKSGVKKRFKFTASGKVKHGVAGKRHRLISHNSKYIRTNRGTSVLSEADAAHVRLWAPYGLK</sequence>
<accession>Q1GNX7</accession>
<evidence type="ECO:0000255" key="1">
    <source>
        <dbReference type="HAMAP-Rule" id="MF_00514"/>
    </source>
</evidence>
<evidence type="ECO:0000305" key="2"/>
<comment type="similarity">
    <text evidence="1">Belongs to the bacterial ribosomal protein bL35 family.</text>
</comment>
<reference key="1">
    <citation type="journal article" date="2009" name="Proc. Natl. Acad. Sci. U.S.A.">
        <title>The genomic basis of trophic strategy in marine bacteria.</title>
        <authorList>
            <person name="Lauro F.M."/>
            <person name="McDougald D."/>
            <person name="Thomas T."/>
            <person name="Williams T.J."/>
            <person name="Egan S."/>
            <person name="Rice S."/>
            <person name="DeMaere M.Z."/>
            <person name="Ting L."/>
            <person name="Ertan H."/>
            <person name="Johnson J."/>
            <person name="Ferriera S."/>
            <person name="Lapidus A."/>
            <person name="Anderson I."/>
            <person name="Kyrpides N."/>
            <person name="Munk A.C."/>
            <person name="Detter C."/>
            <person name="Han C.S."/>
            <person name="Brown M.V."/>
            <person name="Robb F.T."/>
            <person name="Kjelleberg S."/>
            <person name="Cavicchioli R."/>
        </authorList>
    </citation>
    <scope>NUCLEOTIDE SEQUENCE [LARGE SCALE GENOMIC DNA]</scope>
    <source>
        <strain>DSM 13593 / LMG 18877 / RB2256</strain>
    </source>
</reference>
<gene>
    <name evidence="1" type="primary">rpmI</name>
    <name type="ordered locus">Sala_2940</name>
</gene>
<feature type="chain" id="PRO_0000258757" description="Large ribosomal subunit protein bL35">
    <location>
        <begin position="1"/>
        <end position="67"/>
    </location>
</feature>